<gene>
    <name evidence="1" type="primary">ubiE</name>
    <name type="ordered locus">Tcr_0402</name>
</gene>
<organism>
    <name type="scientific">Hydrogenovibrio crunogenus (strain DSM 25203 / XCL-2)</name>
    <name type="common">Thiomicrospira crunogena</name>
    <dbReference type="NCBI Taxonomy" id="317025"/>
    <lineage>
        <taxon>Bacteria</taxon>
        <taxon>Pseudomonadati</taxon>
        <taxon>Pseudomonadota</taxon>
        <taxon>Gammaproteobacteria</taxon>
        <taxon>Thiotrichales</taxon>
        <taxon>Piscirickettsiaceae</taxon>
        <taxon>Hydrogenovibrio</taxon>
    </lineage>
</organism>
<evidence type="ECO:0000255" key="1">
    <source>
        <dbReference type="HAMAP-Rule" id="MF_01813"/>
    </source>
</evidence>
<name>UBIE_HYDCU</name>
<reference key="1">
    <citation type="journal article" date="2006" name="PLoS Biol.">
        <title>The genome of deep-sea vent chemolithoautotroph Thiomicrospira crunogena XCL-2.</title>
        <authorList>
            <person name="Scott K.M."/>
            <person name="Sievert S.M."/>
            <person name="Abril F.N."/>
            <person name="Ball L.A."/>
            <person name="Barrett C.J."/>
            <person name="Blake R.A."/>
            <person name="Boller A.J."/>
            <person name="Chain P.S.G."/>
            <person name="Clark J.A."/>
            <person name="Davis C.R."/>
            <person name="Detter C."/>
            <person name="Do K.F."/>
            <person name="Dobrinski K.P."/>
            <person name="Faza B.I."/>
            <person name="Fitzpatrick K.A."/>
            <person name="Freyermuth S.K."/>
            <person name="Harmer T.L."/>
            <person name="Hauser L.J."/>
            <person name="Huegler M."/>
            <person name="Kerfeld C.A."/>
            <person name="Klotz M.G."/>
            <person name="Kong W.W."/>
            <person name="Land M."/>
            <person name="Lapidus A."/>
            <person name="Larimer F.W."/>
            <person name="Longo D.L."/>
            <person name="Lucas S."/>
            <person name="Malfatti S.A."/>
            <person name="Massey S.E."/>
            <person name="Martin D.D."/>
            <person name="McCuddin Z."/>
            <person name="Meyer F."/>
            <person name="Moore J.L."/>
            <person name="Ocampo L.H. Jr."/>
            <person name="Paul J.H."/>
            <person name="Paulsen I.T."/>
            <person name="Reep D.K."/>
            <person name="Ren Q."/>
            <person name="Ross R.L."/>
            <person name="Sato P.Y."/>
            <person name="Thomas P."/>
            <person name="Tinkham L.E."/>
            <person name="Zeruth G.T."/>
        </authorList>
    </citation>
    <scope>NUCLEOTIDE SEQUENCE [LARGE SCALE GENOMIC DNA]</scope>
    <source>
        <strain>DSM 25203 / XCL-2</strain>
    </source>
</reference>
<feature type="chain" id="PRO_1000056312" description="Ubiquinone/menaquinone biosynthesis C-methyltransferase UbiE">
    <location>
        <begin position="1"/>
        <end position="254"/>
    </location>
</feature>
<feature type="binding site" evidence="1">
    <location>
        <position position="77"/>
    </location>
    <ligand>
        <name>S-adenosyl-L-methionine</name>
        <dbReference type="ChEBI" id="CHEBI:59789"/>
    </ligand>
</feature>
<feature type="binding site" evidence="1">
    <location>
        <position position="98"/>
    </location>
    <ligand>
        <name>S-adenosyl-L-methionine</name>
        <dbReference type="ChEBI" id="CHEBI:59789"/>
    </ligand>
</feature>
<feature type="binding site" evidence="1">
    <location>
        <begin position="126"/>
        <end position="127"/>
    </location>
    <ligand>
        <name>S-adenosyl-L-methionine</name>
        <dbReference type="ChEBI" id="CHEBI:59789"/>
    </ligand>
</feature>
<feature type="binding site" evidence="1">
    <location>
        <position position="143"/>
    </location>
    <ligand>
        <name>S-adenosyl-L-methionine</name>
        <dbReference type="ChEBI" id="CHEBI:59789"/>
    </ligand>
</feature>
<dbReference type="EC" id="2.1.1.163" evidence="1"/>
<dbReference type="EC" id="2.1.1.201" evidence="1"/>
<dbReference type="EMBL" id="CP000109">
    <property type="protein sequence ID" value="ABB40998.1"/>
    <property type="molecule type" value="Genomic_DNA"/>
</dbReference>
<dbReference type="SMR" id="Q31IM5"/>
<dbReference type="STRING" id="317025.Tcr_0402"/>
<dbReference type="KEGG" id="tcx:Tcr_0402"/>
<dbReference type="eggNOG" id="COG2226">
    <property type="taxonomic scope" value="Bacteria"/>
</dbReference>
<dbReference type="HOGENOM" id="CLU_037990_0_0_6"/>
<dbReference type="OrthoDB" id="9808140at2"/>
<dbReference type="UniPathway" id="UPA00079">
    <property type="reaction ID" value="UER00169"/>
</dbReference>
<dbReference type="UniPathway" id="UPA00232"/>
<dbReference type="GO" id="GO:0008425">
    <property type="term" value="F:2-methoxy-6-polyprenyl-1,4-benzoquinol methyltransferase activity"/>
    <property type="evidence" value="ECO:0007669"/>
    <property type="project" value="UniProtKB-UniRule"/>
</dbReference>
<dbReference type="GO" id="GO:0043770">
    <property type="term" value="F:demethylmenaquinone methyltransferase activity"/>
    <property type="evidence" value="ECO:0007669"/>
    <property type="project" value="UniProtKB-UniRule"/>
</dbReference>
<dbReference type="GO" id="GO:0009060">
    <property type="term" value="P:aerobic respiration"/>
    <property type="evidence" value="ECO:0007669"/>
    <property type="project" value="UniProtKB-UniRule"/>
</dbReference>
<dbReference type="GO" id="GO:0009234">
    <property type="term" value="P:menaquinone biosynthetic process"/>
    <property type="evidence" value="ECO:0007669"/>
    <property type="project" value="UniProtKB-UniRule"/>
</dbReference>
<dbReference type="GO" id="GO:0032259">
    <property type="term" value="P:methylation"/>
    <property type="evidence" value="ECO:0007669"/>
    <property type="project" value="UniProtKB-KW"/>
</dbReference>
<dbReference type="CDD" id="cd02440">
    <property type="entry name" value="AdoMet_MTases"/>
    <property type="match status" value="1"/>
</dbReference>
<dbReference type="FunFam" id="3.40.50.150:FF:000014">
    <property type="entry name" value="Ubiquinone/menaquinone biosynthesis C-methyltransferase UbiE"/>
    <property type="match status" value="1"/>
</dbReference>
<dbReference type="Gene3D" id="3.40.50.150">
    <property type="entry name" value="Vaccinia Virus protein VP39"/>
    <property type="match status" value="1"/>
</dbReference>
<dbReference type="HAMAP" id="MF_01813">
    <property type="entry name" value="MenG_UbiE_methyltr"/>
    <property type="match status" value="1"/>
</dbReference>
<dbReference type="InterPro" id="IPR029063">
    <property type="entry name" value="SAM-dependent_MTases_sf"/>
</dbReference>
<dbReference type="InterPro" id="IPR004033">
    <property type="entry name" value="UbiE/COQ5_MeTrFase"/>
</dbReference>
<dbReference type="InterPro" id="IPR023576">
    <property type="entry name" value="UbiE/COQ5_MeTrFase_CS"/>
</dbReference>
<dbReference type="NCBIfam" id="TIGR01934">
    <property type="entry name" value="MenG_MenH_UbiE"/>
    <property type="match status" value="1"/>
</dbReference>
<dbReference type="NCBIfam" id="NF001240">
    <property type="entry name" value="PRK00216.1-1"/>
    <property type="match status" value="1"/>
</dbReference>
<dbReference type="NCBIfam" id="NF001244">
    <property type="entry name" value="PRK00216.1-5"/>
    <property type="match status" value="1"/>
</dbReference>
<dbReference type="PANTHER" id="PTHR43591:SF24">
    <property type="entry name" value="2-METHOXY-6-POLYPRENYL-1,4-BENZOQUINOL METHYLASE, MITOCHONDRIAL"/>
    <property type="match status" value="1"/>
</dbReference>
<dbReference type="PANTHER" id="PTHR43591">
    <property type="entry name" value="METHYLTRANSFERASE"/>
    <property type="match status" value="1"/>
</dbReference>
<dbReference type="Pfam" id="PF01209">
    <property type="entry name" value="Ubie_methyltran"/>
    <property type="match status" value="1"/>
</dbReference>
<dbReference type="SUPFAM" id="SSF53335">
    <property type="entry name" value="S-adenosyl-L-methionine-dependent methyltransferases"/>
    <property type="match status" value="1"/>
</dbReference>
<dbReference type="PROSITE" id="PS51608">
    <property type="entry name" value="SAM_MT_UBIE"/>
    <property type="match status" value="1"/>
</dbReference>
<dbReference type="PROSITE" id="PS01183">
    <property type="entry name" value="UBIE_1"/>
    <property type="match status" value="1"/>
</dbReference>
<dbReference type="PROSITE" id="PS01184">
    <property type="entry name" value="UBIE_2"/>
    <property type="match status" value="1"/>
</dbReference>
<proteinExistence type="inferred from homology"/>
<keyword id="KW-0474">Menaquinone biosynthesis</keyword>
<keyword id="KW-0489">Methyltransferase</keyword>
<keyword id="KW-0949">S-adenosyl-L-methionine</keyword>
<keyword id="KW-0808">Transferase</keyword>
<keyword id="KW-0831">Ubiquinone biosynthesis</keyword>
<sequence length="254" mass="28497">MTTEHSQSKKTIDFGFSEVPLEEKVKKVKGVFDSVAGNYDIMNDVMSFGIHRLWKRHAIELSGIRPGNVVLDLAGGTGDLTKAFAKRVGKTGRVVLADINESMVRVGRDRLTNEGIIGNVDYTITNAEALTYPDNTFDLVTISFGLRNVTNKDKALEEIYRVLKPGGQLMVLEFSKVTQPLLAKAYDFYSFNILPKMGKLIADDEASYQYLAESIRMHPDQETLKKMMLEAGFDKAEYLNMSEGIVALHRGWKY</sequence>
<protein>
    <recommendedName>
        <fullName evidence="1">Ubiquinone/menaquinone biosynthesis C-methyltransferase UbiE</fullName>
        <ecNumber evidence="1">2.1.1.163</ecNumber>
        <ecNumber evidence="1">2.1.1.201</ecNumber>
    </recommendedName>
    <alternativeName>
        <fullName evidence="1">2-methoxy-6-polyprenyl-1,4-benzoquinol methylase</fullName>
    </alternativeName>
    <alternativeName>
        <fullName evidence="1">Demethylmenaquinone methyltransferase</fullName>
    </alternativeName>
</protein>
<comment type="function">
    <text evidence="1">Methyltransferase required for the conversion of demethylmenaquinol (DMKH2) to menaquinol (MKH2) and the conversion of 2-polyprenyl-6-methoxy-1,4-benzoquinol (DDMQH2) to 2-polyprenyl-3-methyl-6-methoxy-1,4-benzoquinol (DMQH2).</text>
</comment>
<comment type="catalytic activity">
    <reaction evidence="1">
        <text>a 2-demethylmenaquinol + S-adenosyl-L-methionine = a menaquinol + S-adenosyl-L-homocysteine + H(+)</text>
        <dbReference type="Rhea" id="RHEA:42640"/>
        <dbReference type="Rhea" id="RHEA-COMP:9539"/>
        <dbReference type="Rhea" id="RHEA-COMP:9563"/>
        <dbReference type="ChEBI" id="CHEBI:15378"/>
        <dbReference type="ChEBI" id="CHEBI:18151"/>
        <dbReference type="ChEBI" id="CHEBI:55437"/>
        <dbReference type="ChEBI" id="CHEBI:57856"/>
        <dbReference type="ChEBI" id="CHEBI:59789"/>
        <dbReference type="EC" id="2.1.1.163"/>
    </reaction>
</comment>
<comment type="catalytic activity">
    <reaction evidence="1">
        <text>a 2-methoxy-6-(all-trans-polyprenyl)benzene-1,4-diol + S-adenosyl-L-methionine = a 5-methoxy-2-methyl-3-(all-trans-polyprenyl)benzene-1,4-diol + S-adenosyl-L-homocysteine + H(+)</text>
        <dbReference type="Rhea" id="RHEA:28286"/>
        <dbReference type="Rhea" id="RHEA-COMP:10858"/>
        <dbReference type="Rhea" id="RHEA-COMP:10859"/>
        <dbReference type="ChEBI" id="CHEBI:15378"/>
        <dbReference type="ChEBI" id="CHEBI:57856"/>
        <dbReference type="ChEBI" id="CHEBI:59789"/>
        <dbReference type="ChEBI" id="CHEBI:84166"/>
        <dbReference type="ChEBI" id="CHEBI:84167"/>
        <dbReference type="EC" id="2.1.1.201"/>
    </reaction>
</comment>
<comment type="pathway">
    <text evidence="1">Quinol/quinone metabolism; menaquinone biosynthesis; menaquinol from 1,4-dihydroxy-2-naphthoate: step 2/2.</text>
</comment>
<comment type="pathway">
    <text evidence="1">Cofactor biosynthesis; ubiquinone biosynthesis.</text>
</comment>
<comment type="similarity">
    <text evidence="1">Belongs to the class I-like SAM-binding methyltransferase superfamily. MenG/UbiE family.</text>
</comment>
<accession>Q31IM5</accession>